<dbReference type="EC" id="2.7.4.22" evidence="1"/>
<dbReference type="EMBL" id="AE008917">
    <property type="protein sequence ID" value="AAL52006.1"/>
    <property type="status" value="ALT_INIT"/>
    <property type="molecule type" value="Genomic_DNA"/>
</dbReference>
<dbReference type="PIR" id="AC3355">
    <property type="entry name" value="AC3355"/>
</dbReference>
<dbReference type="RefSeq" id="WP_004683875.1">
    <property type="nucleotide sequence ID" value="NZ_GG703780.1"/>
</dbReference>
<dbReference type="SMR" id="Q8YHH4"/>
<dbReference type="GeneID" id="29593642"/>
<dbReference type="KEGG" id="bme:BMEI0825"/>
<dbReference type="KEGG" id="bmel:DK63_595"/>
<dbReference type="PATRIC" id="fig|224914.52.peg.620"/>
<dbReference type="eggNOG" id="COG0528">
    <property type="taxonomic scope" value="Bacteria"/>
</dbReference>
<dbReference type="PhylomeDB" id="Q8YHH4"/>
<dbReference type="UniPathway" id="UPA00159">
    <property type="reaction ID" value="UER00275"/>
</dbReference>
<dbReference type="Proteomes" id="UP000000419">
    <property type="component" value="Chromosome I"/>
</dbReference>
<dbReference type="GO" id="GO:0005829">
    <property type="term" value="C:cytosol"/>
    <property type="evidence" value="ECO:0007669"/>
    <property type="project" value="TreeGrafter"/>
</dbReference>
<dbReference type="GO" id="GO:0005524">
    <property type="term" value="F:ATP binding"/>
    <property type="evidence" value="ECO:0007669"/>
    <property type="project" value="UniProtKB-KW"/>
</dbReference>
<dbReference type="GO" id="GO:0033862">
    <property type="term" value="F:UMP kinase activity"/>
    <property type="evidence" value="ECO:0007669"/>
    <property type="project" value="UniProtKB-EC"/>
</dbReference>
<dbReference type="GO" id="GO:0044210">
    <property type="term" value="P:'de novo' CTP biosynthetic process"/>
    <property type="evidence" value="ECO:0007669"/>
    <property type="project" value="UniProtKB-UniRule"/>
</dbReference>
<dbReference type="GO" id="GO:0006225">
    <property type="term" value="P:UDP biosynthetic process"/>
    <property type="evidence" value="ECO:0007669"/>
    <property type="project" value="TreeGrafter"/>
</dbReference>
<dbReference type="CDD" id="cd04254">
    <property type="entry name" value="AAK_UMPK-PyrH-Ec"/>
    <property type="match status" value="1"/>
</dbReference>
<dbReference type="FunFam" id="3.40.1160.10:FF:000001">
    <property type="entry name" value="Uridylate kinase"/>
    <property type="match status" value="1"/>
</dbReference>
<dbReference type="Gene3D" id="3.40.1160.10">
    <property type="entry name" value="Acetylglutamate kinase-like"/>
    <property type="match status" value="1"/>
</dbReference>
<dbReference type="HAMAP" id="MF_01220_B">
    <property type="entry name" value="PyrH_B"/>
    <property type="match status" value="1"/>
</dbReference>
<dbReference type="InterPro" id="IPR036393">
    <property type="entry name" value="AceGlu_kinase-like_sf"/>
</dbReference>
<dbReference type="InterPro" id="IPR001048">
    <property type="entry name" value="Asp/Glu/Uridylate_kinase"/>
</dbReference>
<dbReference type="InterPro" id="IPR011817">
    <property type="entry name" value="Uridylate_kinase"/>
</dbReference>
<dbReference type="InterPro" id="IPR015963">
    <property type="entry name" value="Uridylate_kinase_bac"/>
</dbReference>
<dbReference type="NCBIfam" id="TIGR02075">
    <property type="entry name" value="pyrH_bact"/>
    <property type="match status" value="1"/>
</dbReference>
<dbReference type="PANTHER" id="PTHR42833">
    <property type="entry name" value="URIDYLATE KINASE"/>
    <property type="match status" value="1"/>
</dbReference>
<dbReference type="PANTHER" id="PTHR42833:SF4">
    <property type="entry name" value="URIDYLATE KINASE PUMPKIN, CHLOROPLASTIC"/>
    <property type="match status" value="1"/>
</dbReference>
<dbReference type="Pfam" id="PF00696">
    <property type="entry name" value="AA_kinase"/>
    <property type="match status" value="1"/>
</dbReference>
<dbReference type="PIRSF" id="PIRSF005650">
    <property type="entry name" value="Uridylate_kin"/>
    <property type="match status" value="1"/>
</dbReference>
<dbReference type="SUPFAM" id="SSF53633">
    <property type="entry name" value="Carbamate kinase-like"/>
    <property type="match status" value="1"/>
</dbReference>
<accession>Q8YHH4</accession>
<comment type="function">
    <text evidence="1">Catalyzes the reversible phosphorylation of UMP to UDP.</text>
</comment>
<comment type="catalytic activity">
    <reaction evidence="1">
        <text>UMP + ATP = UDP + ADP</text>
        <dbReference type="Rhea" id="RHEA:24400"/>
        <dbReference type="ChEBI" id="CHEBI:30616"/>
        <dbReference type="ChEBI" id="CHEBI:57865"/>
        <dbReference type="ChEBI" id="CHEBI:58223"/>
        <dbReference type="ChEBI" id="CHEBI:456216"/>
        <dbReference type="EC" id="2.7.4.22"/>
    </reaction>
</comment>
<comment type="activity regulation">
    <text evidence="1">Allosterically activated by GTP. Inhibited by UTP.</text>
</comment>
<comment type="pathway">
    <text evidence="1">Pyrimidine metabolism; CTP biosynthesis via de novo pathway; UDP from UMP (UMPK route): step 1/1.</text>
</comment>
<comment type="subunit">
    <text evidence="1">Homohexamer.</text>
</comment>
<comment type="subcellular location">
    <subcellularLocation>
        <location evidence="1">Cytoplasm</location>
    </subcellularLocation>
</comment>
<comment type="similarity">
    <text evidence="1">Belongs to the UMP kinase family.</text>
</comment>
<comment type="sequence caution" evidence="2">
    <conflict type="erroneous initiation">
        <sequence resource="EMBL-CDS" id="AAL52006"/>
    </conflict>
</comment>
<proteinExistence type="inferred from homology"/>
<evidence type="ECO:0000255" key="1">
    <source>
        <dbReference type="HAMAP-Rule" id="MF_01220"/>
    </source>
</evidence>
<evidence type="ECO:0000305" key="2"/>
<keyword id="KW-0021">Allosteric enzyme</keyword>
<keyword id="KW-0067">ATP-binding</keyword>
<keyword id="KW-0963">Cytoplasm</keyword>
<keyword id="KW-0418">Kinase</keyword>
<keyword id="KW-0547">Nucleotide-binding</keyword>
<keyword id="KW-0665">Pyrimidine biosynthesis</keyword>
<keyword id="KW-0808">Transferase</keyword>
<feature type="chain" id="PRO_0000143827" description="Uridylate kinase">
    <location>
        <begin position="1"/>
        <end position="240"/>
    </location>
</feature>
<feature type="region of interest" description="Involved in allosteric activation by GTP" evidence="1">
    <location>
        <begin position="21"/>
        <end position="26"/>
    </location>
</feature>
<feature type="binding site" evidence="1">
    <location>
        <begin position="13"/>
        <end position="16"/>
    </location>
    <ligand>
        <name>ATP</name>
        <dbReference type="ChEBI" id="CHEBI:30616"/>
    </ligand>
</feature>
<feature type="binding site" evidence="1">
    <location>
        <position position="55"/>
    </location>
    <ligand>
        <name>UMP</name>
        <dbReference type="ChEBI" id="CHEBI:57865"/>
    </ligand>
</feature>
<feature type="binding site" evidence="1">
    <location>
        <position position="56"/>
    </location>
    <ligand>
        <name>ATP</name>
        <dbReference type="ChEBI" id="CHEBI:30616"/>
    </ligand>
</feature>
<feature type="binding site" evidence="1">
    <location>
        <position position="60"/>
    </location>
    <ligand>
        <name>ATP</name>
        <dbReference type="ChEBI" id="CHEBI:30616"/>
    </ligand>
</feature>
<feature type="binding site" evidence="1">
    <location>
        <position position="75"/>
    </location>
    <ligand>
        <name>UMP</name>
        <dbReference type="ChEBI" id="CHEBI:57865"/>
    </ligand>
</feature>
<feature type="binding site" evidence="1">
    <location>
        <begin position="136"/>
        <end position="143"/>
    </location>
    <ligand>
        <name>UMP</name>
        <dbReference type="ChEBI" id="CHEBI:57865"/>
    </ligand>
</feature>
<feature type="binding site" evidence="1">
    <location>
        <position position="163"/>
    </location>
    <ligand>
        <name>ATP</name>
        <dbReference type="ChEBI" id="CHEBI:30616"/>
    </ligand>
</feature>
<feature type="binding site" evidence="1">
    <location>
        <position position="164"/>
    </location>
    <ligand>
        <name>ATP</name>
        <dbReference type="ChEBI" id="CHEBI:30616"/>
    </ligand>
</feature>
<feature type="binding site" evidence="1">
    <location>
        <position position="169"/>
    </location>
    <ligand>
        <name>ATP</name>
        <dbReference type="ChEBI" id="CHEBI:30616"/>
    </ligand>
</feature>
<feature type="binding site" evidence="1">
    <location>
        <position position="172"/>
    </location>
    <ligand>
        <name>ATP</name>
        <dbReference type="ChEBI" id="CHEBI:30616"/>
    </ligand>
</feature>
<gene>
    <name evidence="1" type="primary">pyrH</name>
    <name type="ordered locus">BMEI0825</name>
</gene>
<name>PYRH_BRUME</name>
<reference key="1">
    <citation type="journal article" date="2002" name="Proc. Natl. Acad. Sci. U.S.A.">
        <title>The genome sequence of the facultative intracellular pathogen Brucella melitensis.</title>
        <authorList>
            <person name="DelVecchio V.G."/>
            <person name="Kapatral V."/>
            <person name="Redkar R.J."/>
            <person name="Patra G."/>
            <person name="Mujer C."/>
            <person name="Los T."/>
            <person name="Ivanova N."/>
            <person name="Anderson I."/>
            <person name="Bhattacharyya A."/>
            <person name="Lykidis A."/>
            <person name="Reznik G."/>
            <person name="Jablonski L."/>
            <person name="Larsen N."/>
            <person name="D'Souza M."/>
            <person name="Bernal A."/>
            <person name="Mazur M."/>
            <person name="Goltsman E."/>
            <person name="Selkov E."/>
            <person name="Elzer P.H."/>
            <person name="Hagius S."/>
            <person name="O'Callaghan D."/>
            <person name="Letesson J.-J."/>
            <person name="Haselkorn R."/>
            <person name="Kyrpides N.C."/>
            <person name="Overbeek R."/>
        </authorList>
    </citation>
    <scope>NUCLEOTIDE SEQUENCE [LARGE SCALE GENOMIC DNA]</scope>
    <source>
        <strain>ATCC 23456 / CCUG 17765 / NCTC 10094 / 16M</strain>
    </source>
</reference>
<sequence length="240" mass="25047">MTGKPAYKRVLLKASGEALMGSQGFGIDVSVADRIANDIKQARALGVEVGVVIGGGNIFRGVAVASKGGDRVTGDHMGMLATVINSLALRTSLHKIGVDSVVLSAIAMPEICESFSQRQATAYMDEGKVVIFAGGTGNPFFTTDSAAALRAAEIEADALLKGTQVDGIYSADPKKDPGATRFEQLTHEEVLDRGLAVMDTAAVALARENNILIIVYSIHENGGLADILQGKGRCTIVSDN</sequence>
<protein>
    <recommendedName>
        <fullName evidence="1">Uridylate kinase</fullName>
        <shortName evidence="1">UK</shortName>
        <ecNumber evidence="1">2.7.4.22</ecNumber>
    </recommendedName>
    <alternativeName>
        <fullName evidence="1">Uridine monophosphate kinase</fullName>
        <shortName evidence="1">UMP kinase</shortName>
        <shortName evidence="1">UMPK</shortName>
    </alternativeName>
</protein>
<organism>
    <name type="scientific">Brucella melitensis biotype 1 (strain ATCC 23456 / CCUG 17765 / NCTC 10094 / 16M)</name>
    <dbReference type="NCBI Taxonomy" id="224914"/>
    <lineage>
        <taxon>Bacteria</taxon>
        <taxon>Pseudomonadati</taxon>
        <taxon>Pseudomonadota</taxon>
        <taxon>Alphaproteobacteria</taxon>
        <taxon>Hyphomicrobiales</taxon>
        <taxon>Brucellaceae</taxon>
        <taxon>Brucella/Ochrobactrum group</taxon>
        <taxon>Brucella</taxon>
    </lineage>
</organism>